<reference key="1">
    <citation type="journal article" date="1997" name="Proc. Natl. Acad. Sci. U.S.A.">
        <title>Cloning of a novel T-cell protein FYB that binds FYN and SH2-domain-containing leukocyte protein 76 and modulates interleukin 2 production.</title>
        <authorList>
            <person name="da Silva A.J."/>
            <person name="Li Z."/>
            <person name="de Vera C."/>
            <person name="Canto E."/>
            <person name="Findell P."/>
            <person name="Rudd C.E."/>
        </authorList>
    </citation>
    <scope>NUCLEOTIDE SEQUENCE [MRNA] (ISOFORM FYB-120)</scope>
    <scope>INTERACTION WITH FYN AND LCP2</scope>
    <scope>FUNCTION</scope>
    <source>
        <tissue>T-cell lymphoma</tissue>
    </source>
</reference>
<reference key="2">
    <citation type="journal article" date="1999" name="J. Biol. Chem.">
        <title>Novel isoform of lymphoid adaptor FYN-T-binding protein (FYB-130) interacts with SLP-76 and up-regulates interleukin 2 production.</title>
        <authorList>
            <person name="Veale M."/>
            <person name="Raab M."/>
            <person name="Li Z."/>
            <person name="da Silva A.J."/>
            <person name="Kraeft S.-K."/>
            <person name="Weremowicz S."/>
            <person name="Morton C.C."/>
            <person name="Rudd C.E."/>
        </authorList>
    </citation>
    <scope>NUCLEOTIDE SEQUENCE [MRNA] (ISOFORM FYB-130)</scope>
    <scope>INTERACTION WITH FYN AND LCP2</scope>
    <scope>FUNCTION</scope>
    <source>
        <tissue>Hybridoma</tissue>
    </source>
</reference>
<reference key="3">
    <citation type="journal article" date="2003" name="FEBS Lett.">
        <title>Targeting of MIST to Src-family kinases via SKAP55-SLAP-130 adaptor complex in mast cells(1).</title>
        <authorList>
            <person name="Fujii Y."/>
            <person name="Wakahara S."/>
            <person name="Nakao T."/>
            <person name="Hara T."/>
            <person name="Ohtake H."/>
            <person name="Komurasaki T."/>
            <person name="Kitamura K."/>
            <person name="Tatsuno A."/>
            <person name="Fujiwara N."/>
            <person name="Hozumi N."/>
            <person name="Ra C."/>
            <person name="Kitamura D."/>
            <person name="Goitsuka R."/>
        </authorList>
    </citation>
    <scope>NUCLEOTIDE SEQUENCE [MRNA] (ISOFORM FYB-130)</scope>
    <scope>FUNCTION</scope>
    <scope>INTERACTION WITH FYN; SKAP1 AND CLNK</scope>
    <scope>IDENTIFICATION IN A COMPLEX WITH SKAP1 AND CLNK</scope>
</reference>
<reference key="4">
    <citation type="journal article" date="1999" name="Curr. Biol.">
        <title>SHPS-1 is a scaffold for assembling distinct adhesion-regulated multi-protein complexes in macrophages.</title>
        <authorList>
            <person name="Timms J.F."/>
            <person name="Swanson K.D."/>
            <person name="Marie-Cardine A."/>
            <person name="Raab M."/>
            <person name="Rudd C.E."/>
            <person name="Schraven B."/>
            <person name="Neel B.G."/>
        </authorList>
    </citation>
    <scope>INTERACTION WITH SKAP2</scope>
    <scope>IDENTIFICATION IN A COMPLEX WITH SKAP2 AND PTPNS1</scope>
</reference>
<reference key="5">
    <citation type="journal article" date="2000" name="Cell. Microbiol.">
        <title>The Yersinia tyrosine phosphatase YopH targets a novel adhesion-regulated signalling complex in macrophages.</title>
        <authorList>
            <person name="Black D.S."/>
            <person name="Marie-Cardine A."/>
            <person name="Schraven B."/>
            <person name="Bliska J.B."/>
        </authorList>
    </citation>
    <scope>INTERACTION WITH SKAP2</scope>
    <scope>IDENTIFICATION IN A COMPLEX WITH SKAP2 AND PTPNS1</scope>
    <scope>IDENTIFICATION IN A COMPLEX WITH SKAP2 AND PIRB</scope>
</reference>
<reference key="6">
    <citation type="journal article" date="2007" name="Blood">
        <title>ADAP is required for normal alphaIIb-beta3 activation by VWF/GP Ib-IX-V and other agonists.</title>
        <authorList>
            <person name="Kasirer-Friede A."/>
            <person name="Moran B."/>
            <person name="Nagrampa-Orje J."/>
            <person name="Swanson K."/>
            <person name="Ruggeri Z.M."/>
            <person name="Schraven B."/>
            <person name="Neel B.G."/>
            <person name="Koretzky G."/>
            <person name="Shattil S.J."/>
        </authorList>
    </citation>
    <scope>INTERACTION WITH SKAP2</scope>
    <scope>FUNCTION</scope>
    <scope>DISRUPTION PHENOTYPE</scope>
</reference>
<reference key="7">
    <citation type="journal article" date="2007" name="J. Immunol.">
        <title>Quantitative time-resolved phosphoproteomic analysis of mast cell signaling.</title>
        <authorList>
            <person name="Cao L."/>
            <person name="Yu K."/>
            <person name="Banh C."/>
            <person name="Nguyen V."/>
            <person name="Ritz A."/>
            <person name="Raphael B.J."/>
            <person name="Kawakami Y."/>
            <person name="Kawakami T."/>
            <person name="Salomon A.R."/>
        </authorList>
    </citation>
    <scope>PHOSPHORYLATION [LARGE SCALE ANALYSIS] AT TYR-559 AND SER-561</scope>
    <scope>IDENTIFICATION BY MASS SPECTROMETRY [LARGE SCALE ANALYSIS]</scope>
    <source>
        <tissue>Mast cell</tissue>
    </source>
</reference>
<reference key="8">
    <citation type="journal article" date="2007" name="Proc. Natl. Acad. Sci. U.S.A.">
        <title>Large-scale phosphorylation analysis of mouse liver.</title>
        <authorList>
            <person name="Villen J."/>
            <person name="Beausoleil S.A."/>
            <person name="Gerber S.A."/>
            <person name="Gygi S.P."/>
        </authorList>
    </citation>
    <scope>IDENTIFICATION BY MASS SPECTROMETRY [LARGE SCALE ANALYSIS]</scope>
    <source>
        <tissue>Liver</tissue>
    </source>
</reference>
<reference key="9">
    <citation type="journal article" date="2009" name="Immunity">
        <title>The phagosomal proteome in interferon-gamma-activated macrophages.</title>
        <authorList>
            <person name="Trost M."/>
            <person name="English L."/>
            <person name="Lemieux S."/>
            <person name="Courcelles M."/>
            <person name="Desjardins M."/>
            <person name="Thibault P."/>
        </authorList>
    </citation>
    <scope>PHOSPHORYLATION [LARGE SCALE ANALYSIS] AT SER-28</scope>
    <scope>IDENTIFICATION BY MASS SPECTROMETRY [LARGE SCALE ANALYSIS]</scope>
</reference>
<reference key="10">
    <citation type="journal article" date="2010" name="Cell">
        <title>A tissue-specific atlas of mouse protein phosphorylation and expression.</title>
        <authorList>
            <person name="Huttlin E.L."/>
            <person name="Jedrychowski M.P."/>
            <person name="Elias J.E."/>
            <person name="Goswami T."/>
            <person name="Rad R."/>
            <person name="Beausoleil S.A."/>
            <person name="Villen J."/>
            <person name="Haas W."/>
            <person name="Sowa M.E."/>
            <person name="Gygi S.P."/>
        </authorList>
    </citation>
    <scope>PHOSPHORYLATION [LARGE SCALE ANALYSIS] AT SER-28; SER-46; SER-222; SER-445; TYR-559; SER-561 AND SER-568</scope>
    <scope>IDENTIFICATION BY MASS SPECTROMETRY [LARGE SCALE ANALYSIS]</scope>
    <source>
        <tissue>Heart</tissue>
        <tissue>Lung</tissue>
        <tissue>Spleen</tissue>
    </source>
</reference>
<reference key="11">
    <citation type="journal article" date="2011" name="Am. J. Physiol.">
        <title>TM4SF10 and ADAP interaction in podocytes: role in Fyn activity and nephrin phosphorylation.</title>
        <authorList>
            <person name="Azhibekov T.A."/>
            <person name="Wu Z."/>
            <person name="Padiyar A."/>
            <person name="Bruggeman L.A."/>
            <person name="Simske J.S."/>
        </authorList>
    </citation>
    <scope>INTERACTION WITH TMEM47</scope>
    <scope>SUBCELLULAR LOCATION</scope>
    <scope>TISSUE SPECIFICITY</scope>
</reference>
<evidence type="ECO:0000250" key="1">
    <source>
        <dbReference type="UniProtKB" id="O15117"/>
    </source>
</evidence>
<evidence type="ECO:0000255" key="2"/>
<evidence type="ECO:0000255" key="3">
    <source>
        <dbReference type="PROSITE-ProRule" id="PRU00192"/>
    </source>
</evidence>
<evidence type="ECO:0000255" key="4">
    <source>
        <dbReference type="PROSITE-ProRule" id="PRU00768"/>
    </source>
</evidence>
<evidence type="ECO:0000256" key="5">
    <source>
        <dbReference type="SAM" id="MobiDB-lite"/>
    </source>
</evidence>
<evidence type="ECO:0000269" key="6">
    <source>
    </source>
</evidence>
<evidence type="ECO:0000269" key="7">
    <source>
    </source>
</evidence>
<evidence type="ECO:0000269" key="8">
    <source>
    </source>
</evidence>
<evidence type="ECO:0000269" key="9">
    <source>
    </source>
</evidence>
<evidence type="ECO:0000269" key="10">
    <source>
    </source>
</evidence>
<evidence type="ECO:0000269" key="11">
    <source>
    </source>
</evidence>
<evidence type="ECO:0000269" key="12">
    <source>
    </source>
</evidence>
<evidence type="ECO:0000303" key="13">
    <source>
    </source>
</evidence>
<evidence type="ECO:0007744" key="14">
    <source>
    </source>
</evidence>
<evidence type="ECO:0007744" key="15">
    <source>
    </source>
</evidence>
<evidence type="ECO:0007744" key="16">
    <source>
    </source>
</evidence>
<dbReference type="EMBL" id="AF001863">
    <property type="protein sequence ID" value="AAB62227.1"/>
    <property type="molecule type" value="mRNA"/>
</dbReference>
<dbReference type="EMBL" id="AF061744">
    <property type="protein sequence ID" value="AAD03267.1"/>
    <property type="molecule type" value="mRNA"/>
</dbReference>
<dbReference type="CCDS" id="CCDS37031.1">
    <molecule id="O35601-1"/>
</dbReference>
<dbReference type="RefSeq" id="NP_001265198.1">
    <molecule id="O35601-2"/>
    <property type="nucleotide sequence ID" value="NM_001278269.1"/>
</dbReference>
<dbReference type="RefSeq" id="NP_035945.1">
    <molecule id="O35601-1"/>
    <property type="nucleotide sequence ID" value="NM_011815.5"/>
</dbReference>
<dbReference type="SMR" id="O35601"/>
<dbReference type="BioGRID" id="204772">
    <property type="interactions" value="7"/>
</dbReference>
<dbReference type="CORUM" id="O35601"/>
<dbReference type="DIP" id="DIP-41350N"/>
<dbReference type="FunCoup" id="O35601">
    <property type="interactions" value="638"/>
</dbReference>
<dbReference type="IntAct" id="O35601">
    <property type="interactions" value="6"/>
</dbReference>
<dbReference type="MINT" id="O35601"/>
<dbReference type="STRING" id="10090.ENSMUSP00000087947"/>
<dbReference type="GlyGen" id="O35601">
    <property type="glycosylation" value="1 site"/>
</dbReference>
<dbReference type="iPTMnet" id="O35601"/>
<dbReference type="PhosphoSitePlus" id="O35601"/>
<dbReference type="jPOST" id="O35601"/>
<dbReference type="PaxDb" id="10090-ENSMUSP00000087947"/>
<dbReference type="PeptideAtlas" id="O35601"/>
<dbReference type="ProteomicsDB" id="266897">
    <molecule id="O35601-1"/>
</dbReference>
<dbReference type="ProteomicsDB" id="266898">
    <molecule id="O35601-2"/>
</dbReference>
<dbReference type="Antibodypedia" id="23110">
    <property type="antibodies" value="349 antibodies from 37 providers"/>
</dbReference>
<dbReference type="DNASU" id="23880"/>
<dbReference type="Ensembl" id="ENSMUST00000090461.12">
    <molecule id="O35601-1"/>
    <property type="protein sequence ID" value="ENSMUSP00000087947.6"/>
    <property type="gene ID" value="ENSMUSG00000022148.17"/>
</dbReference>
<dbReference type="GeneID" id="23880"/>
<dbReference type="KEGG" id="mmu:23880"/>
<dbReference type="UCSC" id="uc007vdi.2">
    <molecule id="O35601-1"/>
    <property type="organism name" value="mouse"/>
</dbReference>
<dbReference type="UCSC" id="uc007vdk.2">
    <molecule id="O35601-2"/>
    <property type="organism name" value="mouse"/>
</dbReference>
<dbReference type="AGR" id="MGI:1346327"/>
<dbReference type="CTD" id="2533"/>
<dbReference type="MGI" id="MGI:1346327">
    <property type="gene designation" value="Fyb1"/>
</dbReference>
<dbReference type="VEuPathDB" id="HostDB:ENSMUSG00000022148"/>
<dbReference type="eggNOG" id="ENOG502QTTQ">
    <property type="taxonomic scope" value="Eukaryota"/>
</dbReference>
<dbReference type="GeneTree" id="ENSGT00530000063460"/>
<dbReference type="HOGENOM" id="CLU_339375_0_0_1"/>
<dbReference type="InParanoid" id="O35601"/>
<dbReference type="OMA" id="KSSTWSW"/>
<dbReference type="OrthoDB" id="9396701at2759"/>
<dbReference type="PhylomeDB" id="O35601"/>
<dbReference type="TreeFam" id="TF337003"/>
<dbReference type="Reactome" id="R-MMU-202433">
    <property type="pathway name" value="Generation of second messenger molecules"/>
</dbReference>
<dbReference type="Reactome" id="R-MMU-391160">
    <property type="pathway name" value="Signal regulatory protein family interactions"/>
</dbReference>
<dbReference type="BioGRID-ORCS" id="23880">
    <property type="hits" value="1 hit in 77 CRISPR screens"/>
</dbReference>
<dbReference type="ChiTaRS" id="Fyb">
    <property type="organism name" value="mouse"/>
</dbReference>
<dbReference type="PRO" id="PR:O35601"/>
<dbReference type="Proteomes" id="UP000000589">
    <property type="component" value="Chromosome 15"/>
</dbReference>
<dbReference type="RNAct" id="O35601">
    <property type="molecule type" value="protein"/>
</dbReference>
<dbReference type="Bgee" id="ENSMUSG00000022148">
    <property type="expression patterns" value="Expressed in granulocyte and 198 other cell types or tissues"/>
</dbReference>
<dbReference type="ExpressionAtlas" id="O35601">
    <property type="expression patterns" value="baseline and differential"/>
</dbReference>
<dbReference type="GO" id="GO:0070161">
    <property type="term" value="C:anchoring junction"/>
    <property type="evidence" value="ECO:0007669"/>
    <property type="project" value="UniProtKB-SubCell"/>
</dbReference>
<dbReference type="GO" id="GO:0005829">
    <property type="term" value="C:cytosol"/>
    <property type="evidence" value="ECO:0000304"/>
    <property type="project" value="Reactome"/>
</dbReference>
<dbReference type="GO" id="GO:0005634">
    <property type="term" value="C:nucleus"/>
    <property type="evidence" value="ECO:0007669"/>
    <property type="project" value="UniProtKB-SubCell"/>
</dbReference>
<dbReference type="GO" id="GO:0005886">
    <property type="term" value="C:plasma membrane"/>
    <property type="evidence" value="ECO:0000314"/>
    <property type="project" value="MGI"/>
</dbReference>
<dbReference type="GO" id="GO:0032991">
    <property type="term" value="C:protein-containing complex"/>
    <property type="evidence" value="ECO:0000314"/>
    <property type="project" value="UniProtKB"/>
</dbReference>
<dbReference type="GO" id="GO:0008289">
    <property type="term" value="F:lipid binding"/>
    <property type="evidence" value="ECO:0007669"/>
    <property type="project" value="InterPro"/>
</dbReference>
<dbReference type="GO" id="GO:0007229">
    <property type="term" value="P:integrin-mediated signaling pathway"/>
    <property type="evidence" value="ECO:0007669"/>
    <property type="project" value="InterPro"/>
</dbReference>
<dbReference type="GO" id="GO:0072659">
    <property type="term" value="P:protein localization to plasma membrane"/>
    <property type="evidence" value="ECO:0000315"/>
    <property type="project" value="MGI"/>
</dbReference>
<dbReference type="CDD" id="cd11867">
    <property type="entry name" value="hSH3_ADAP"/>
    <property type="match status" value="1"/>
</dbReference>
<dbReference type="FunFam" id="2.30.30.40:FF:000156">
    <property type="entry name" value="FYN-binding protein-like isoform X1"/>
    <property type="match status" value="1"/>
</dbReference>
<dbReference type="FunFam" id="2.30.30.40:FF:000133">
    <property type="entry name" value="FYN-binding protein-like isoform X2"/>
    <property type="match status" value="1"/>
</dbReference>
<dbReference type="Gene3D" id="2.30.30.40">
    <property type="entry name" value="SH3 Domains"/>
    <property type="match status" value="2"/>
</dbReference>
<dbReference type="InterPro" id="IPR043443">
    <property type="entry name" value="FYB1/2-like"/>
</dbReference>
<dbReference type="InterPro" id="IPR035540">
    <property type="entry name" value="FYB_hSH3"/>
</dbReference>
<dbReference type="InterPro" id="IPR029294">
    <property type="entry name" value="hSH3"/>
</dbReference>
<dbReference type="InterPro" id="IPR036028">
    <property type="entry name" value="SH3-like_dom_sf"/>
</dbReference>
<dbReference type="InterPro" id="IPR001452">
    <property type="entry name" value="SH3_domain"/>
</dbReference>
<dbReference type="PANTHER" id="PTHR16830:SF13">
    <property type="entry name" value="FYN-BINDING PROTEIN 1"/>
    <property type="match status" value="1"/>
</dbReference>
<dbReference type="PANTHER" id="PTHR16830">
    <property type="entry name" value="SH2 CONTAINING ADAPTOR PRAM-1 RELATED"/>
    <property type="match status" value="1"/>
</dbReference>
<dbReference type="Pfam" id="PF14603">
    <property type="entry name" value="hSH3"/>
    <property type="match status" value="1"/>
</dbReference>
<dbReference type="Pfam" id="PF07653">
    <property type="entry name" value="SH3_2"/>
    <property type="match status" value="1"/>
</dbReference>
<dbReference type="SMART" id="SM00326">
    <property type="entry name" value="SH3"/>
    <property type="match status" value="1"/>
</dbReference>
<dbReference type="SUPFAM" id="SSF50044">
    <property type="entry name" value="SH3-domain"/>
    <property type="match status" value="2"/>
</dbReference>
<dbReference type="PROSITE" id="PS50002">
    <property type="entry name" value="SH3"/>
    <property type="match status" value="2"/>
</dbReference>
<proteinExistence type="evidence at protein level"/>
<protein>
    <recommendedName>
        <fullName>FYN-binding protein 1</fullName>
    </recommendedName>
    <alternativeName>
        <fullName>Adhesion and degranulation promoting adaptor protein</fullName>
        <shortName>ADAP</shortName>
    </alternativeName>
    <alternativeName>
        <fullName>FYB-120/130</fullName>
        <shortName>p120/p130</shortName>
    </alternativeName>
    <alternativeName>
        <fullName>FYN-T-binding protein</fullName>
    </alternativeName>
    <alternativeName>
        <fullName>SLAP-130</fullName>
    </alternativeName>
    <alternativeName>
        <fullName>SLP-76-associated phosphoprotein</fullName>
    </alternativeName>
</protein>
<gene>
    <name type="primary">Fyb1</name>
    <name type="synonym">Fyb</name>
</gene>
<name>FYB1_MOUSE</name>
<sequence length="819" mass="90055">MAKFNTGSNPTEEAATSSRPFKVAGQSSPSGIQSRKNLFDNQGNASPPAGPSSMPKFGTTKPPLAAKPTYEEKPEKEPKPPFLKPTGGSPRFGTQPNSVSRDPEVKVGFLKPVSPKPTSLTKEDSKPVVLRPPGNKLHNLNQESDLKTPGPKPGPAPPVPENELKPGFSKVAGAKSKFMPAAQDTDSKPRFPRHTFGQKPSLSTEDSQEENTSKNVPVQKGSPVQLGAKSKGAPFKPPKEDPEDKDHGAPSSPFPGVVLKPAASRGSPGLSKNFEEKKEDRKTDLAKNIFLNKLNQEEPARFPKAPSKLTAGTPWGQSQEKEGDKNSATPKQKALPPLSVLGPPPPKPNRPPNVDLTRFRKADSANSATKSQTPYSTTSLPPPPPTHPASQPPLPASHPAHPPVPSLPPRNIKPPLDLKHPINDENQDGVMHSDGTGNLEEEQESEGETYEDIDSSKERDKKREKEEKKRLELERKEQKEREKKEQELKKKFKLTGPIQVIHHAKACCDVKGGKNELSFKQGEDIEIIRITDNPEGKWLGRTARGSYGYIKTTAVEIDYDSLKRKKNSLNAVPPRLVEDDQDVYDDVAEQDAPNSHGQSGSGGMFPPPPTDDEIYDGIEEEDDDDGSVPQVDEKTNAWSWGILKMLKGKDDRKKSIREKPKVSESDNNEGSSLPSQHKQLDVGEEVYDDVDASDFPPPPAEMSQGMSVGRAKTEEKDPKKLKKQEKEEKDLRKKFKYDGEIRVLYSTKVASSLTSKKWGARDLQIKPGESLEVIQSTDDTKVLCRNEEGKYGYVLRSYLVDNDGEIYDDIADGCIYDND</sequence>
<organism>
    <name type="scientific">Mus musculus</name>
    <name type="common">Mouse</name>
    <dbReference type="NCBI Taxonomy" id="10090"/>
    <lineage>
        <taxon>Eukaryota</taxon>
        <taxon>Metazoa</taxon>
        <taxon>Chordata</taxon>
        <taxon>Craniata</taxon>
        <taxon>Vertebrata</taxon>
        <taxon>Euteleostomi</taxon>
        <taxon>Mammalia</taxon>
        <taxon>Eutheria</taxon>
        <taxon>Euarchontoglires</taxon>
        <taxon>Glires</taxon>
        <taxon>Rodentia</taxon>
        <taxon>Myomorpha</taxon>
        <taxon>Muroidea</taxon>
        <taxon>Muridae</taxon>
        <taxon>Murinae</taxon>
        <taxon>Mus</taxon>
        <taxon>Mus</taxon>
    </lineage>
</organism>
<feature type="chain" id="PRO_0000087397" description="FYN-binding protein 1">
    <location>
        <begin position="1"/>
        <end position="819"/>
    </location>
</feature>
<feature type="domain" description="SH3 1" evidence="3">
    <location>
        <begin position="499"/>
        <end position="560"/>
    </location>
</feature>
<feature type="domain" description="SH3 2" evidence="3">
    <location>
        <begin position="736"/>
        <end position="804"/>
    </location>
</feature>
<feature type="region of interest" description="Disordered" evidence="5">
    <location>
        <begin position="1"/>
        <end position="490"/>
    </location>
</feature>
<feature type="region of interest" description="Disordered" evidence="5">
    <location>
        <begin position="589"/>
        <end position="635"/>
    </location>
</feature>
<feature type="region of interest" description="Disordered" evidence="5">
    <location>
        <begin position="649"/>
        <end position="728"/>
    </location>
</feature>
<feature type="coiled-coil region" evidence="2">
    <location>
        <begin position="448"/>
        <end position="495"/>
    </location>
</feature>
<feature type="short sequence motif" description="Nuclear localization signal" evidence="2">
    <location>
        <begin position="479"/>
        <end position="493"/>
    </location>
</feature>
<feature type="short sequence motif" description="SH2-binding; to LCP2">
    <location>
        <begin position="584"/>
        <end position="587"/>
    </location>
</feature>
<feature type="short sequence motif" description="SH2-binding; to FYN">
    <location>
        <begin position="615"/>
        <end position="618"/>
    </location>
</feature>
<feature type="short sequence motif" description="Nuclear localization signal" evidence="2">
    <location>
        <begin position="710"/>
        <end position="736"/>
    </location>
</feature>
<feature type="compositionally biased region" description="Polar residues" evidence="5">
    <location>
        <begin position="1"/>
        <end position="45"/>
    </location>
</feature>
<feature type="compositionally biased region" description="Basic and acidic residues" evidence="5">
    <location>
        <begin position="69"/>
        <end position="79"/>
    </location>
</feature>
<feature type="compositionally biased region" description="Pro residues" evidence="5">
    <location>
        <begin position="150"/>
        <end position="160"/>
    </location>
</feature>
<feature type="compositionally biased region" description="Basic and acidic residues" evidence="5">
    <location>
        <begin position="237"/>
        <end position="248"/>
    </location>
</feature>
<feature type="compositionally biased region" description="Basic and acidic residues" evidence="5">
    <location>
        <begin position="273"/>
        <end position="285"/>
    </location>
</feature>
<feature type="compositionally biased region" description="Pro residues" evidence="5">
    <location>
        <begin position="342"/>
        <end position="351"/>
    </location>
</feature>
<feature type="compositionally biased region" description="Pro residues" evidence="5">
    <location>
        <begin position="380"/>
        <end position="412"/>
    </location>
</feature>
<feature type="compositionally biased region" description="Acidic residues" evidence="5">
    <location>
        <begin position="439"/>
        <end position="453"/>
    </location>
</feature>
<feature type="compositionally biased region" description="Basic and acidic residues" evidence="5">
    <location>
        <begin position="454"/>
        <end position="489"/>
    </location>
</feature>
<feature type="compositionally biased region" description="Acidic residues" evidence="5">
    <location>
        <begin position="610"/>
        <end position="626"/>
    </location>
</feature>
<feature type="compositionally biased region" description="Basic and acidic residues" evidence="5">
    <location>
        <begin position="649"/>
        <end position="664"/>
    </location>
</feature>
<feature type="compositionally biased region" description="Polar residues" evidence="5">
    <location>
        <begin position="668"/>
        <end position="677"/>
    </location>
</feature>
<feature type="compositionally biased region" description="Acidic residues" evidence="5">
    <location>
        <begin position="682"/>
        <end position="692"/>
    </location>
</feature>
<feature type="compositionally biased region" description="Basic and acidic residues" evidence="5">
    <location>
        <begin position="711"/>
        <end position="728"/>
    </location>
</feature>
<feature type="modified residue" description="N6-acetyllysine" evidence="1">
    <location>
        <position position="3"/>
    </location>
</feature>
<feature type="modified residue" description="Phosphoserine" evidence="15 16">
    <location>
        <position position="28"/>
    </location>
</feature>
<feature type="modified residue" description="Phosphoserine" evidence="16">
    <location>
        <position position="46"/>
    </location>
</feature>
<feature type="modified residue" description="Phosphoserine" evidence="16">
    <location>
        <position position="222"/>
    </location>
</feature>
<feature type="modified residue" description="Phosphoserine" evidence="1">
    <location>
        <position position="318"/>
    </location>
</feature>
<feature type="modified residue" description="Phosphoserine" evidence="16">
    <location>
        <position position="445"/>
    </location>
</feature>
<feature type="modified residue" description="Phosphotyrosine" evidence="14 16">
    <location>
        <position position="559"/>
    </location>
</feature>
<feature type="modified residue" description="Phosphoserine" evidence="14 16">
    <location>
        <position position="561"/>
    </location>
</feature>
<feature type="modified residue" description="Phosphoserine" evidence="16">
    <location>
        <position position="568"/>
    </location>
</feature>
<feature type="modified residue" description="Phosphotyrosine" evidence="1">
    <location>
        <position position="687"/>
    </location>
</feature>
<feature type="splice variant" id="VSP_004261" description="In isoform FYB-120." evidence="13">
    <location>
        <begin position="627"/>
        <end position="672"/>
    </location>
</feature>
<accession>O35601</accession>
<accession>Q9Z2H3</accession>
<keyword id="KW-0007">Acetylation</keyword>
<keyword id="KW-0025">Alternative splicing</keyword>
<keyword id="KW-0965">Cell junction</keyword>
<keyword id="KW-0175">Coiled coil</keyword>
<keyword id="KW-0963">Cytoplasm</keyword>
<keyword id="KW-0539">Nucleus</keyword>
<keyword id="KW-0597">Phosphoprotein</keyword>
<keyword id="KW-1185">Reference proteome</keyword>
<keyword id="KW-0677">Repeat</keyword>
<keyword id="KW-0728">SH3 domain</keyword>
<comment type="function">
    <text evidence="1 7 9 10 12">Acts as an adapter protein of the FYN and LCP2 signaling cascades in T-cells (PubMed:10497204, PubMed:9207119). May play a role in linking T-cell signaling to remodeling of the actin cytoskeleton (By similarity). Modulates the expression of IL2 (PubMed:10497204, PubMed:9207119). Involved in platelet activation (PubMed:17003372). Prevents the degradation of SKAP1 and SKAP2 (By similarity). May be involved in high affinity immunoglobulin epsilon receptor signaling in mast cells (PubMed:12681493).</text>
</comment>
<comment type="subunit">
    <text evidence="1 6 7 8 9 10 11 12">Part of a complex consisting of SKAP2, FYB1 and PTPNS1 (PubMed:10469599). Part of a complex consisting of SKAP2, FYB1 and PIRB (PubMed:10469599). Part of a complex consisting of SKAP1, FYB1 and CLNK (PubMed:12681493). Interacts with CLNK (via its SH2 domain); this interaction allows SKAP1 and FYB1 to recruit FYN to the complex, thus promoting the phosphorylation of CLNK by FYN (PubMed:10497204, PubMed:12681493, PubMed:9207119). Interacts with FYN (PubMed:10497204, PubMed:9207119). Interacts with LCP2 (PubMed:10497204, PubMed:9207119). Interacts with SKAP1 (PubMed:12681493). Interacts with SKAP2 (PubMed:10469599, PubMed:11207596, PubMed:17003372). Interacts with FASLG (By similarity). Interacts with EVL (By similarity). Interacts with TMEM47 (PubMed:21881001). Interacts with LCK (By similarity).</text>
</comment>
<comment type="interaction">
    <interactant intactId="EBI-7353747">
        <id>O35601</id>
    </interactant>
    <interactant intactId="EBI-5324248">
        <id>Q60787</id>
        <label>Lcp2</label>
    </interactant>
    <organismsDiffer>false</organismsDiffer>
    <experiments>7</experiments>
</comment>
<comment type="interaction">
    <interactant intactId="EBI-7353747">
        <id>O35601</id>
    </interactant>
    <interactant intactId="EBI-11685657">
        <id>Q9JJG6</id>
        <label>Tmem47</label>
    </interactant>
    <organismsDiffer>false</organismsDiffer>
    <experiments>4</experiments>
</comment>
<comment type="subcellular location">
    <subcellularLocation>
        <location evidence="1">Cytoplasm</location>
    </subcellularLocation>
    <subcellularLocation>
        <location evidence="4">Nucleus</location>
    </subcellularLocation>
    <subcellularLocation>
        <location evidence="11">Cell junction</location>
    </subcellularLocation>
    <text evidence="11">Colocalizes with TMEM47 at cell-cell contacts in podocytes.</text>
</comment>
<comment type="alternative products">
    <event type="alternative splicing"/>
    <isoform>
        <id>O35601-1</id>
        <name>FYB-130</name>
        <sequence type="displayed"/>
    </isoform>
    <isoform>
        <id>O35601-2</id>
        <name>FYB-120</name>
        <sequence type="described" ref="VSP_004261"/>
    </isoform>
</comment>
<comment type="tissue specificity">
    <text evidence="11">Expressed in hematopoietic tissues such as myeloid and T-cells, spleen and thymus. Not expressed in B-cells, nor in non-lymphoid tissues. FYB-130 is preferentially expressed in mature T-cells compared to FYB-120, whereas thymocytes showed a greater relative amount of FYB-120. Expressed in podocytes.</text>
</comment>
<comment type="PTM">
    <text>T-cell receptor ligation leads to increased tyrosine phosphorylation.</text>
</comment>
<comment type="disruption phenotype">
    <text evidence="10">Slight defects in platelet function.</text>
</comment>